<accession>A5FRU8</accession>
<keyword id="KW-0028">Amino-acid biosynthesis</keyword>
<keyword id="KW-0413">Isomerase</keyword>
<keyword id="KW-0486">Methionine biosynthesis</keyword>
<feature type="chain" id="PRO_0000357172" description="Methylthioribose-1-phosphate isomerase">
    <location>
        <begin position="1"/>
        <end position="332"/>
    </location>
</feature>
<feature type="active site" description="Proton donor" evidence="1">
    <location>
        <position position="233"/>
    </location>
</feature>
<feature type="binding site" evidence="1">
    <location>
        <begin position="44"/>
        <end position="46"/>
    </location>
    <ligand>
        <name>substrate</name>
    </ligand>
</feature>
<feature type="binding site" evidence="1">
    <location>
        <position position="87"/>
    </location>
    <ligand>
        <name>substrate</name>
    </ligand>
</feature>
<feature type="binding site" evidence="1">
    <location>
        <position position="192"/>
    </location>
    <ligand>
        <name>substrate</name>
    </ligand>
</feature>
<feature type="binding site" evidence="1">
    <location>
        <begin position="243"/>
        <end position="244"/>
    </location>
    <ligand>
        <name>substrate</name>
    </ligand>
</feature>
<feature type="site" description="Transition state stabilizer" evidence="1">
    <location>
        <position position="153"/>
    </location>
</feature>
<reference key="1">
    <citation type="submission" date="2007-05" db="EMBL/GenBank/DDBJ databases">
        <title>Complete sequence of Dehalococcoides sp. BAV1.</title>
        <authorList>
            <consortium name="US DOE Joint Genome Institute"/>
            <person name="Copeland A."/>
            <person name="Lucas S."/>
            <person name="Lapidus A."/>
            <person name="Barry K."/>
            <person name="Detter J.C."/>
            <person name="Glavina del Rio T."/>
            <person name="Hammon N."/>
            <person name="Israni S."/>
            <person name="Pitluck S."/>
            <person name="Lowry S."/>
            <person name="Clum A."/>
            <person name="Schmutz J."/>
            <person name="Larimer F."/>
            <person name="Land M."/>
            <person name="Hauser L."/>
            <person name="Kyrpides N."/>
            <person name="Kim E."/>
            <person name="Ritalahti K.M."/>
            <person name="Loeffler F."/>
            <person name="Richardson P."/>
        </authorList>
    </citation>
    <scope>NUCLEOTIDE SEQUENCE [LARGE SCALE GENOMIC DNA]</scope>
    <source>
        <strain>ATCC BAA-2100 / JCM 16839 / KCTC 5957 / BAV1</strain>
    </source>
</reference>
<evidence type="ECO:0000255" key="1">
    <source>
        <dbReference type="HAMAP-Rule" id="MF_01678"/>
    </source>
</evidence>
<evidence type="ECO:0000305" key="2"/>
<dbReference type="EC" id="5.3.1.23" evidence="1"/>
<dbReference type="EMBL" id="CP000688">
    <property type="protein sequence ID" value="ABQ17079.1"/>
    <property type="molecule type" value="Genomic_DNA"/>
</dbReference>
<dbReference type="SMR" id="A5FRU8"/>
<dbReference type="KEGG" id="deb:DehaBAV1_0494"/>
<dbReference type="PATRIC" id="fig|216389.18.peg.538"/>
<dbReference type="HOGENOM" id="CLU_016218_1_2_0"/>
<dbReference type="UniPathway" id="UPA00904">
    <property type="reaction ID" value="UER00874"/>
</dbReference>
<dbReference type="GO" id="GO:0046523">
    <property type="term" value="F:S-methyl-5-thioribose-1-phosphate isomerase activity"/>
    <property type="evidence" value="ECO:0007669"/>
    <property type="project" value="UniProtKB-UniRule"/>
</dbReference>
<dbReference type="GO" id="GO:0019509">
    <property type="term" value="P:L-methionine salvage from methylthioadenosine"/>
    <property type="evidence" value="ECO:0007669"/>
    <property type="project" value="UniProtKB-UniRule"/>
</dbReference>
<dbReference type="FunFam" id="1.20.120.420:FF:000003">
    <property type="entry name" value="Methylthioribose-1-phosphate isomerase"/>
    <property type="match status" value="1"/>
</dbReference>
<dbReference type="FunFam" id="3.40.50.10470:FF:000006">
    <property type="entry name" value="Methylthioribose-1-phosphate isomerase"/>
    <property type="match status" value="1"/>
</dbReference>
<dbReference type="Gene3D" id="1.20.120.420">
    <property type="entry name" value="translation initiation factor eif-2b, domain 1"/>
    <property type="match status" value="1"/>
</dbReference>
<dbReference type="Gene3D" id="3.40.50.10470">
    <property type="entry name" value="Translation initiation factor eif-2b, domain 2"/>
    <property type="match status" value="1"/>
</dbReference>
<dbReference type="HAMAP" id="MF_01678">
    <property type="entry name" value="Salvage_MtnA"/>
    <property type="match status" value="1"/>
</dbReference>
<dbReference type="InterPro" id="IPR000649">
    <property type="entry name" value="IF-2B-related"/>
</dbReference>
<dbReference type="InterPro" id="IPR005251">
    <property type="entry name" value="IF-M1Pi"/>
</dbReference>
<dbReference type="InterPro" id="IPR042529">
    <property type="entry name" value="IF_2B-like_C"/>
</dbReference>
<dbReference type="InterPro" id="IPR011559">
    <property type="entry name" value="Initiation_fac_2B_a/b/d"/>
</dbReference>
<dbReference type="InterPro" id="IPR027363">
    <property type="entry name" value="M1Pi_N"/>
</dbReference>
<dbReference type="InterPro" id="IPR037171">
    <property type="entry name" value="NagB/RpiA_transferase-like"/>
</dbReference>
<dbReference type="NCBIfam" id="TIGR00524">
    <property type="entry name" value="eIF-2B_rel"/>
    <property type="match status" value="1"/>
</dbReference>
<dbReference type="NCBIfam" id="NF004326">
    <property type="entry name" value="PRK05720.1"/>
    <property type="match status" value="1"/>
</dbReference>
<dbReference type="NCBIfam" id="TIGR00512">
    <property type="entry name" value="salvage_mtnA"/>
    <property type="match status" value="1"/>
</dbReference>
<dbReference type="PANTHER" id="PTHR43475">
    <property type="entry name" value="METHYLTHIORIBOSE-1-PHOSPHATE ISOMERASE"/>
    <property type="match status" value="1"/>
</dbReference>
<dbReference type="PANTHER" id="PTHR43475:SF1">
    <property type="entry name" value="METHYLTHIORIBOSE-1-PHOSPHATE ISOMERASE"/>
    <property type="match status" value="1"/>
</dbReference>
<dbReference type="Pfam" id="PF01008">
    <property type="entry name" value="IF-2B"/>
    <property type="match status" value="1"/>
</dbReference>
<dbReference type="SUPFAM" id="SSF100950">
    <property type="entry name" value="NagB/RpiA/CoA transferase-like"/>
    <property type="match status" value="1"/>
</dbReference>
<name>MTNA_DEHMB</name>
<gene>
    <name evidence="1" type="primary">mtnA</name>
    <name type="ordered locus">DehaBAV1_0494</name>
</gene>
<comment type="function">
    <text evidence="1">Catalyzes the interconversion of methylthioribose-1-phosphate (MTR-1-P) into methylthioribulose-1-phosphate (MTRu-1-P).</text>
</comment>
<comment type="catalytic activity">
    <reaction evidence="1">
        <text>5-(methylsulfanyl)-alpha-D-ribose 1-phosphate = 5-(methylsulfanyl)-D-ribulose 1-phosphate</text>
        <dbReference type="Rhea" id="RHEA:19989"/>
        <dbReference type="ChEBI" id="CHEBI:58533"/>
        <dbReference type="ChEBI" id="CHEBI:58548"/>
        <dbReference type="EC" id="5.3.1.23"/>
    </reaction>
</comment>
<comment type="pathway">
    <text evidence="1">Amino-acid biosynthesis; L-methionine biosynthesis via salvage pathway; L-methionine from S-methyl-5-thio-alpha-D-ribose 1-phosphate: step 1/6.</text>
</comment>
<comment type="similarity">
    <text evidence="2">Belongs to the eIF-2B alpha/beta/delta subunits family. MtnA subfamily.</text>
</comment>
<sequence length="332" mass="35923">MKAIEWRNNRLIILDQTLLPLEEKYLELNDYHAVAEAIKTLRVRGAPSIGVAAAYGIAFGALSIETRYCSEFLPLYQQISAEIASTRPTAKNLFMAVERMDHVVASGTDVLQVKISLVDEAVKIHREEEEASRKISTFGADLIQPGWTVLTHCNAGPLATAGYGTALGVIIAAHQQNKGISAFATETRPLLQGARLTALELKEAGVPFKLITDSMAGHFMKKGVINAVVVGADRIARNGDTANKIGTYSLAVLALAHGIPFYVAAPSSTFDKSIESGNDIVIEERKPEEITYLRGQRIAPENIDVANPAFDVTPANLIAAFITENGIIRRGE</sequence>
<proteinExistence type="inferred from homology"/>
<protein>
    <recommendedName>
        <fullName evidence="1">Methylthioribose-1-phosphate isomerase</fullName>
        <shortName evidence="1">M1Pi</shortName>
        <shortName evidence="1">MTR-1-P isomerase</shortName>
        <ecNumber evidence="1">5.3.1.23</ecNumber>
    </recommendedName>
    <alternativeName>
        <fullName evidence="1">S-methyl-5-thioribose-1-phosphate isomerase</fullName>
    </alternativeName>
</protein>
<organism>
    <name type="scientific">Dehalococcoides mccartyi (strain ATCC BAA-2100 / JCM 16839 / KCTC 5957 / BAV1)</name>
    <dbReference type="NCBI Taxonomy" id="216389"/>
    <lineage>
        <taxon>Bacteria</taxon>
        <taxon>Bacillati</taxon>
        <taxon>Chloroflexota</taxon>
        <taxon>Dehalococcoidia</taxon>
        <taxon>Dehalococcoidales</taxon>
        <taxon>Dehalococcoidaceae</taxon>
        <taxon>Dehalococcoides</taxon>
    </lineage>
</organism>